<accession>Q9ZRF9</accession>
<accession>Q9LQ97</accession>
<proteinExistence type="evidence at protein level"/>
<organism>
    <name type="scientific">Arabidopsis thaliana</name>
    <name type="common">Mouse-ear cress</name>
    <dbReference type="NCBI Taxonomy" id="3702"/>
    <lineage>
        <taxon>Eukaryota</taxon>
        <taxon>Viridiplantae</taxon>
        <taxon>Streptophyta</taxon>
        <taxon>Embryophyta</taxon>
        <taxon>Tracheophyta</taxon>
        <taxon>Spermatophyta</taxon>
        <taxon>Magnoliopsida</taxon>
        <taxon>eudicotyledons</taxon>
        <taxon>Gunneridae</taxon>
        <taxon>Pentapetalae</taxon>
        <taxon>rosids</taxon>
        <taxon>malvids</taxon>
        <taxon>Brassicales</taxon>
        <taxon>Brassicaceae</taxon>
        <taxon>Camelineae</taxon>
        <taxon>Arabidopsis</taxon>
    </lineage>
</organism>
<protein>
    <recommendedName>
        <fullName>Probable LRR receptor-like serine/threonine-protein kinase RPK1</fullName>
        <ecNumber>2.7.11.1</ecNumber>
    </recommendedName>
    <alternativeName>
        <fullName>Protein TOADSTOOL 1</fullName>
    </alternativeName>
    <alternativeName>
        <fullName>Receptor-like protein kinase 1</fullName>
    </alternativeName>
</protein>
<comment type="function">
    <text evidence="7 8 9">Involved in the main abscisic acid-mediated (ABA) signaling pathway and in early ABA perception. Together with RPK2, required for pattern formation along the radial axis (e.g. the apical embryonic domain cell types that generate cotyledon primordia), and the apical-basal axis (e.g. differentiation of the basal pole during early embryogenesis).</text>
</comment>
<comment type="catalytic activity">
    <reaction>
        <text>L-seryl-[protein] + ATP = O-phospho-L-seryl-[protein] + ADP + H(+)</text>
        <dbReference type="Rhea" id="RHEA:17989"/>
        <dbReference type="Rhea" id="RHEA-COMP:9863"/>
        <dbReference type="Rhea" id="RHEA-COMP:11604"/>
        <dbReference type="ChEBI" id="CHEBI:15378"/>
        <dbReference type="ChEBI" id="CHEBI:29999"/>
        <dbReference type="ChEBI" id="CHEBI:30616"/>
        <dbReference type="ChEBI" id="CHEBI:83421"/>
        <dbReference type="ChEBI" id="CHEBI:456216"/>
        <dbReference type="EC" id="2.7.11.1"/>
    </reaction>
</comment>
<comment type="catalytic activity">
    <reaction>
        <text>L-threonyl-[protein] + ATP = O-phospho-L-threonyl-[protein] + ADP + H(+)</text>
        <dbReference type="Rhea" id="RHEA:46608"/>
        <dbReference type="Rhea" id="RHEA-COMP:11060"/>
        <dbReference type="Rhea" id="RHEA-COMP:11605"/>
        <dbReference type="ChEBI" id="CHEBI:15378"/>
        <dbReference type="ChEBI" id="CHEBI:30013"/>
        <dbReference type="ChEBI" id="CHEBI:30616"/>
        <dbReference type="ChEBI" id="CHEBI:61977"/>
        <dbReference type="ChEBI" id="CHEBI:456216"/>
        <dbReference type="EC" id="2.7.11.1"/>
    </reaction>
</comment>
<comment type="interaction">
    <interactant intactId="EBI-1238953">
        <id>Q9ZRF9</id>
    </interactant>
    <interactant intactId="EBI-1238687">
        <id>O04567</id>
        <label>At1g27190</label>
    </interactant>
    <organismsDiffer>false</organismsDiffer>
    <experiments>2</experiments>
</comment>
<comment type="interaction">
    <interactant intactId="EBI-1238953">
        <id>Q9ZRF9</id>
    </interactant>
    <interactant intactId="EBI-20651225">
        <id>C0LGI5</id>
        <label>At1g69990</label>
    </interactant>
    <organismsDiffer>false</organismsDiffer>
    <experiments>3</experiments>
</comment>
<comment type="interaction">
    <interactant intactId="EBI-1238953">
        <id>Q9ZRF9</id>
    </interactant>
    <interactant intactId="EBI-20651957">
        <id>Q9ZQR3</id>
        <label>At2g14510</label>
    </interactant>
    <organismsDiffer>false</organismsDiffer>
    <experiments>2</experiments>
</comment>
<comment type="interaction">
    <interactant intactId="EBI-1238953">
        <id>Q9ZRF9</id>
    </interactant>
    <interactant intactId="EBI-16902452">
        <id>Q8VYT3</id>
        <label>At4g30520</label>
    </interactant>
    <organismsDiffer>false</organismsDiffer>
    <experiments>4</experiments>
</comment>
<comment type="interaction">
    <interactant intactId="EBI-1238953">
        <id>Q9ZRF9</id>
    </interactant>
    <interactant intactId="EBI-6298290">
        <id>Q9ASS4</id>
        <label>At5g48380</label>
    </interactant>
    <organismsDiffer>false</organismsDiffer>
    <experiments>2</experiments>
</comment>
<comment type="interaction">
    <interactant intactId="EBI-1238953">
        <id>Q9ZRF9</id>
    </interactant>
    <interactant intactId="EBI-617138">
        <id>Q94F62</id>
        <label>BAK1</label>
    </interactant>
    <organismsDiffer>false</organismsDiffer>
    <experiments>4</experiments>
</comment>
<comment type="interaction">
    <interactant intactId="EBI-1238953">
        <id>Q9ZRF9</id>
    </interactant>
    <interactant intactId="EBI-20651413">
        <id>Q9LJF3</id>
        <label>BRL3</label>
    </interactant>
    <organismsDiffer>false</organismsDiffer>
    <experiments>2</experiments>
</comment>
<comment type="interaction">
    <interactant intactId="EBI-1238953">
        <id>Q9ZRF9</id>
    </interactant>
    <interactant intactId="EBI-16940407">
        <id>Q42371</id>
        <label>ERECTA</label>
    </interactant>
    <organismsDiffer>false</organismsDiffer>
    <experiments>3</experiments>
</comment>
<comment type="interaction">
    <interactant intactId="EBI-1238953">
        <id>Q9ZRF9</id>
    </interactant>
    <interactant intactId="EBI-16914248">
        <id>C0LGW6</id>
        <label>ERL1</label>
    </interactant>
    <organismsDiffer>false</organismsDiffer>
    <experiments>3</experiments>
</comment>
<comment type="interaction">
    <interactant intactId="EBI-1238953">
        <id>Q9ZRF9</id>
    </interactant>
    <interactant intactId="EBI-16895926">
        <id>Q6XAT2</id>
        <label>ERL2</label>
    </interactant>
    <organismsDiffer>false</organismsDiffer>
    <experiments>3</experiments>
</comment>
<comment type="interaction">
    <interactant intactId="EBI-1238953">
        <id>Q9ZRF9</id>
    </interactant>
    <interactant intactId="EBI-16904927">
        <id>C0LGX3</id>
        <label>HSL2</label>
    </interactant>
    <organismsDiffer>false</organismsDiffer>
    <experiments>2</experiments>
</comment>
<comment type="interaction">
    <interactant intactId="EBI-1238953">
        <id>Q9ZRF9</id>
    </interactant>
    <interactant intactId="EBI-16924837">
        <id>Q9C8I6</id>
        <label>IOS1</label>
    </interactant>
    <organismsDiffer>false</organismsDiffer>
    <experiments>4</experiments>
</comment>
<comment type="interaction">
    <interactant intactId="EBI-1238953">
        <id>Q9ZRF9</id>
    </interactant>
    <interactant intactId="EBI-20651739">
        <id>Q9ZVD4</id>
        <label>LRR-RLK</label>
    </interactant>
    <organismsDiffer>false</organismsDiffer>
    <experiments>2</experiments>
</comment>
<comment type="interaction">
    <interactant intactId="EBI-1238953">
        <id>Q9ZRF9</id>
    </interactant>
    <interactant intactId="EBI-16146189">
        <id>Q9LFS4</id>
        <label>NIK1</label>
    </interactant>
    <organismsDiffer>false</organismsDiffer>
    <experiments>4</experiments>
</comment>
<comment type="interaction">
    <interactant intactId="EBI-1238953">
        <id>Q9ZRF9</id>
    </interactant>
    <interactant intactId="EBI-16904988">
        <id>Q9C7S5</id>
        <label>PSY1R</label>
    </interactant>
    <organismsDiffer>false</organismsDiffer>
    <experiments>2</experiments>
</comment>
<comment type="interaction">
    <interactant intactId="EBI-1238953">
        <id>Q9ZRF9</id>
    </interactant>
    <interactant intactId="EBI-1238953">
        <id>Q9ZRF9</id>
        <label>RPK1</label>
    </interactant>
    <organismsDiffer>false</organismsDiffer>
    <experiments>2</experiments>
</comment>
<comment type="interaction">
    <interactant intactId="EBI-1238953">
        <id>Q9ZRF9</id>
    </interactant>
    <interactant intactId="EBI-16887868">
        <id>Q8LPS5</id>
        <label>SERK5</label>
    </interactant>
    <organismsDiffer>false</organismsDiffer>
    <experiments>2</experiments>
</comment>
<comment type="interaction">
    <interactant intactId="EBI-1238953">
        <id>Q9ZRF9</id>
    </interactant>
    <interactant intactId="EBI-16954301">
        <id>Q9C8M9</id>
        <label>SRF6</label>
    </interactant>
    <organismsDiffer>false</organismsDiffer>
    <experiments>2</experiments>
</comment>
<comment type="interaction">
    <interactant intactId="EBI-1238953">
        <id>Q9ZRF9</id>
    </interactant>
    <interactant intactId="EBI-17072125">
        <id>Q8RWZ1</id>
        <label>SUB</label>
    </interactant>
    <organismsDiffer>false</organismsDiffer>
    <experiments>2</experiments>
</comment>
<comment type="subcellular location">
    <subcellularLocation>
        <location evidence="7 8 9">Cell membrane</location>
        <topology evidence="7 8 9">Single-pass type I membrane protein</topology>
    </subcellularLocation>
</comment>
<comment type="tissue specificity">
    <text evidence="10">Expressed in roots, stems, leaves, and flowers.</text>
</comment>
<comment type="developmental stage">
    <text evidence="8 9">First detected in the suspensor cells of octant-stage embryos, in the basal plasma membrane of the basal-most cell of the suspensor, which is in direct contact with maternal tissue. Expressed in the central domain protodermal cells when cotyledon primordia become recognizable. Later observed throughout the central domain and basal domain of the embryo proper, as well as the suspensor.</text>
</comment>
<comment type="induction">
    <text evidence="7 10">By ABA (at protein level), dehydration, high salt levels, and low temperature.</text>
</comment>
<comment type="disruption phenotype">
    <text evidence="7 9">Decreased sensitivity to ABA during germination, growth, and stomatal closure. Impaired central domain protoderm patterning defects, and defective cotyledon primordia cell types.</text>
</comment>
<comment type="similarity">
    <text evidence="5">Belongs to the protein kinase superfamily. Ser/Thr protein kinase family.</text>
</comment>
<comment type="sequence caution" evidence="11">
    <conflict type="erroneous gene model prediction">
        <sequence resource="EMBL-CDS" id="AAF27063"/>
    </conflict>
</comment>
<name>RPK1_ARATH</name>
<feature type="signal peptide" evidence="4">
    <location>
        <begin position="1"/>
        <end position="19"/>
    </location>
</feature>
<feature type="chain" id="PRO_0000387522" description="Probable LRR receptor-like serine/threonine-protein kinase RPK1">
    <location>
        <begin position="20"/>
        <end position="540"/>
    </location>
</feature>
<feature type="topological domain" description="Extracellular" evidence="4">
    <location>
        <begin position="20"/>
        <end position="198"/>
    </location>
</feature>
<feature type="transmembrane region" description="Helical" evidence="4">
    <location>
        <begin position="199"/>
        <end position="219"/>
    </location>
</feature>
<feature type="topological domain" description="Cytoplasmic" evidence="4">
    <location>
        <begin position="220"/>
        <end position="540"/>
    </location>
</feature>
<feature type="repeat" description="LRR 1">
    <location>
        <begin position="118"/>
        <end position="142"/>
    </location>
</feature>
<feature type="repeat" description="LRR 2">
    <location>
        <begin position="144"/>
        <end position="169"/>
    </location>
</feature>
<feature type="domain" description="Protein kinase" evidence="5">
    <location>
        <begin position="261"/>
        <end position="535"/>
    </location>
</feature>
<feature type="active site" description="Proton acceptor" evidence="5 6">
    <location>
        <position position="385"/>
    </location>
</feature>
<feature type="binding site" evidence="5">
    <location>
        <begin position="267"/>
        <end position="275"/>
    </location>
    <ligand>
        <name>ATP</name>
        <dbReference type="ChEBI" id="CHEBI:30616"/>
    </ligand>
</feature>
<feature type="binding site" evidence="5">
    <location>
        <position position="289"/>
    </location>
    <ligand>
        <name>ATP</name>
        <dbReference type="ChEBI" id="CHEBI:30616"/>
    </ligand>
</feature>
<feature type="modified residue" description="Phosphothreonine" evidence="2">
    <location>
        <position position="250"/>
    </location>
</feature>
<feature type="modified residue" description="Phosphothreonine" evidence="2">
    <location>
        <position position="258"/>
    </location>
</feature>
<feature type="modified residue" description="Phosphotyrosine" evidence="2">
    <location>
        <position position="334"/>
    </location>
</feature>
<feature type="modified residue" description="Phosphotyrosine" evidence="1">
    <location>
        <position position="372"/>
    </location>
</feature>
<feature type="modified residue" description="Phosphotyrosine" evidence="1">
    <location>
        <position position="427"/>
    </location>
</feature>
<feature type="modified residue" description="Phosphothreonine" evidence="3">
    <location>
        <position position="435"/>
    </location>
</feature>
<sequence length="540" mass="59742">MKLLGLVFLLFNLFMFSFSRKLLTESGGGLHDEAALLKLKSSFLDPNGVLSSWVSDSSSNHCSWYGVSCNSDSRVVSLILRGCDELEGSGVLHLPDLSSCSSSKRRLGGVISPVVGDLSEIRVLSLSFNDLRGEIPKEIWGLEKLEILDLKGNNFIGGIRVVDNVVLRKLMSFEDEDEIGPSSADDDSPGKSGLYPIEIASIVSASVIVFVLLVLVILFIYTRKWKRNSQVQVDEIKEIKVFVDIGIPLTYEIIVRATGYFSNSNCIGHGGFGSTYKAEVSPTNVFAVKRLSVGRFQGDQQFHAEISALEMVRHPNLVMLIGYHASETEMFLIYNYLSGGNLQDFIKERSKAAIEWKVLHKIALDVARALSYLHEQCSPKVLHRDIKPSNILLDNNYNAYLSDFGLSKLLGTSQSHVTTGVAGTFGYVAPEYAMTCRVSEKADVYSYGIVLLELISDKRALDPSFSSHENGFNIVSWAHMMLSQGKAKEVFTTGLWETGPPDDLVEVLHLALKCTVDSLSIRPTMKQAVRLLKRIQPSRL</sequence>
<evidence type="ECO:0000250" key="1">
    <source>
        <dbReference type="UniProtKB" id="C0LGT6"/>
    </source>
</evidence>
<evidence type="ECO:0000250" key="2">
    <source>
        <dbReference type="UniProtKB" id="O22476"/>
    </source>
</evidence>
<evidence type="ECO:0000250" key="3">
    <source>
        <dbReference type="UniProtKB" id="Q9M0G7"/>
    </source>
</evidence>
<evidence type="ECO:0000255" key="4"/>
<evidence type="ECO:0000255" key="5">
    <source>
        <dbReference type="PROSITE-ProRule" id="PRU00159"/>
    </source>
</evidence>
<evidence type="ECO:0000255" key="6">
    <source>
        <dbReference type="PROSITE-ProRule" id="PRU10027"/>
    </source>
</evidence>
<evidence type="ECO:0000269" key="7">
    <source>
    </source>
</evidence>
<evidence type="ECO:0000269" key="8">
    <source>
    </source>
</evidence>
<evidence type="ECO:0000269" key="9">
    <source>
    </source>
</evidence>
<evidence type="ECO:0000269" key="10">
    <source>
    </source>
</evidence>
<evidence type="ECO:0000305" key="11"/>
<reference key="1">
    <citation type="journal article" date="1997" name="Plant Physiol.">
        <title>Identification of a receptor-like protein kinase gene rapidly induced by abscisic acid, dehydration, high salt, and cold treatments in Arabidopsis thaliana.</title>
        <authorList>
            <person name="Hong S.W."/>
            <person name="Jon J.H."/>
            <person name="Kwak J.M."/>
            <person name="Nam H.G."/>
        </authorList>
    </citation>
    <scope>NUCLEOTIDE SEQUENCE [MRNA]</scope>
    <scope>TISSUE SPECIFICITY</scope>
    <scope>INDUCTION BY ABA; DEHYDRATION; HIGH SALT AND LOW TEMPERATURE</scope>
    <source>
        <strain>cv. Columbia</strain>
        <tissue>Flower</tissue>
    </source>
</reference>
<reference key="2">
    <citation type="journal article" date="2000" name="Nature">
        <title>Sequence and analysis of chromosome 1 of the plant Arabidopsis thaliana.</title>
        <authorList>
            <person name="Theologis A."/>
            <person name="Ecker J.R."/>
            <person name="Palm C.J."/>
            <person name="Federspiel N.A."/>
            <person name="Kaul S."/>
            <person name="White O."/>
            <person name="Alonso J."/>
            <person name="Altafi H."/>
            <person name="Araujo R."/>
            <person name="Bowman C.L."/>
            <person name="Brooks S.Y."/>
            <person name="Buehler E."/>
            <person name="Chan A."/>
            <person name="Chao Q."/>
            <person name="Chen H."/>
            <person name="Cheuk R.F."/>
            <person name="Chin C.W."/>
            <person name="Chung M.K."/>
            <person name="Conn L."/>
            <person name="Conway A.B."/>
            <person name="Conway A.R."/>
            <person name="Creasy T.H."/>
            <person name="Dewar K."/>
            <person name="Dunn P."/>
            <person name="Etgu P."/>
            <person name="Feldblyum T.V."/>
            <person name="Feng J.-D."/>
            <person name="Fong B."/>
            <person name="Fujii C.Y."/>
            <person name="Gill J.E."/>
            <person name="Goldsmith A.D."/>
            <person name="Haas B."/>
            <person name="Hansen N.F."/>
            <person name="Hughes B."/>
            <person name="Huizar L."/>
            <person name="Hunter J.L."/>
            <person name="Jenkins J."/>
            <person name="Johnson-Hopson C."/>
            <person name="Khan S."/>
            <person name="Khaykin E."/>
            <person name="Kim C.J."/>
            <person name="Koo H.L."/>
            <person name="Kremenetskaia I."/>
            <person name="Kurtz D.B."/>
            <person name="Kwan A."/>
            <person name="Lam B."/>
            <person name="Langin-Hooper S."/>
            <person name="Lee A."/>
            <person name="Lee J.M."/>
            <person name="Lenz C.A."/>
            <person name="Li J.H."/>
            <person name="Li Y.-P."/>
            <person name="Lin X."/>
            <person name="Liu S.X."/>
            <person name="Liu Z.A."/>
            <person name="Luros J.S."/>
            <person name="Maiti R."/>
            <person name="Marziali A."/>
            <person name="Militscher J."/>
            <person name="Miranda M."/>
            <person name="Nguyen M."/>
            <person name="Nierman W.C."/>
            <person name="Osborne B.I."/>
            <person name="Pai G."/>
            <person name="Peterson J."/>
            <person name="Pham P.K."/>
            <person name="Rizzo M."/>
            <person name="Rooney T."/>
            <person name="Rowley D."/>
            <person name="Sakano H."/>
            <person name="Salzberg S.L."/>
            <person name="Schwartz J.R."/>
            <person name="Shinn P."/>
            <person name="Southwick A.M."/>
            <person name="Sun H."/>
            <person name="Tallon L.J."/>
            <person name="Tambunga G."/>
            <person name="Toriumi M.J."/>
            <person name="Town C.D."/>
            <person name="Utterback T."/>
            <person name="Van Aken S."/>
            <person name="Vaysberg M."/>
            <person name="Vysotskaia V.S."/>
            <person name="Walker M."/>
            <person name="Wu D."/>
            <person name="Yu G."/>
            <person name="Fraser C.M."/>
            <person name="Venter J.C."/>
            <person name="Davis R.W."/>
        </authorList>
    </citation>
    <scope>NUCLEOTIDE SEQUENCE [LARGE SCALE GENOMIC DNA]</scope>
    <source>
        <strain>cv. Columbia</strain>
    </source>
</reference>
<reference key="3">
    <citation type="journal article" date="2017" name="Plant J.">
        <title>Araport11: a complete reannotation of the Arabidopsis thaliana reference genome.</title>
        <authorList>
            <person name="Cheng C.Y."/>
            <person name="Krishnakumar V."/>
            <person name="Chan A.P."/>
            <person name="Thibaud-Nissen F."/>
            <person name="Schobel S."/>
            <person name="Town C.D."/>
        </authorList>
    </citation>
    <scope>GENOME REANNOTATION</scope>
    <source>
        <strain>cv. Columbia</strain>
    </source>
</reference>
<reference key="4">
    <citation type="journal article" date="2003" name="Science">
        <title>Empirical analysis of transcriptional activity in the Arabidopsis genome.</title>
        <authorList>
            <person name="Yamada K."/>
            <person name="Lim J."/>
            <person name="Dale J.M."/>
            <person name="Chen H."/>
            <person name="Shinn P."/>
            <person name="Palm C.J."/>
            <person name="Southwick A.M."/>
            <person name="Wu H.C."/>
            <person name="Kim C.J."/>
            <person name="Nguyen M."/>
            <person name="Pham P.K."/>
            <person name="Cheuk R.F."/>
            <person name="Karlin-Newmann G."/>
            <person name="Liu S.X."/>
            <person name="Lam B."/>
            <person name="Sakano H."/>
            <person name="Wu T."/>
            <person name="Yu G."/>
            <person name="Miranda M."/>
            <person name="Quach H.L."/>
            <person name="Tripp M."/>
            <person name="Chang C.H."/>
            <person name="Lee J.M."/>
            <person name="Toriumi M.J."/>
            <person name="Chan M.M."/>
            <person name="Tang C.C."/>
            <person name="Onodera C.S."/>
            <person name="Deng J.M."/>
            <person name="Akiyama K."/>
            <person name="Ansari Y."/>
            <person name="Arakawa T."/>
            <person name="Banh J."/>
            <person name="Banno F."/>
            <person name="Bowser L."/>
            <person name="Brooks S.Y."/>
            <person name="Carninci P."/>
            <person name="Chao Q."/>
            <person name="Choy N."/>
            <person name="Enju A."/>
            <person name="Goldsmith A.D."/>
            <person name="Gurjal M."/>
            <person name="Hansen N.F."/>
            <person name="Hayashizaki Y."/>
            <person name="Johnson-Hopson C."/>
            <person name="Hsuan V.W."/>
            <person name="Iida K."/>
            <person name="Karnes M."/>
            <person name="Khan S."/>
            <person name="Koesema E."/>
            <person name="Ishida J."/>
            <person name="Jiang P.X."/>
            <person name="Jones T."/>
            <person name="Kawai J."/>
            <person name="Kamiya A."/>
            <person name="Meyers C."/>
            <person name="Nakajima M."/>
            <person name="Narusaka M."/>
            <person name="Seki M."/>
            <person name="Sakurai T."/>
            <person name="Satou M."/>
            <person name="Tamse R."/>
            <person name="Vaysberg M."/>
            <person name="Wallender E.K."/>
            <person name="Wong C."/>
            <person name="Yamamura Y."/>
            <person name="Yuan S."/>
            <person name="Shinozaki K."/>
            <person name="Davis R.W."/>
            <person name="Theologis A."/>
            <person name="Ecker J.R."/>
        </authorList>
    </citation>
    <scope>NUCLEOTIDE SEQUENCE [LARGE SCALE MRNA]</scope>
    <source>
        <strain>cv. Columbia</strain>
    </source>
</reference>
<reference key="5">
    <citation type="journal article" date="2010" name="BMC Genomics">
        <title>Genome-wide cloning and sequence analysis of leucine-rich repeat receptor-like protein kinase genes in Arabidopsis thaliana.</title>
        <authorList>
            <person name="Gou X."/>
            <person name="He K."/>
            <person name="Yang H."/>
            <person name="Yuan T."/>
            <person name="Lin H."/>
            <person name="Clouse S.D."/>
            <person name="Li J."/>
        </authorList>
    </citation>
    <scope>NUCLEOTIDE SEQUENCE [LARGE SCALE MRNA]</scope>
    <source>
        <strain>cv. Columbia</strain>
    </source>
</reference>
<reference key="6">
    <citation type="journal article" date="2005" name="Plant Cell">
        <title>Leucine-rich repeat receptor-like kinase1 is a key membrane-bound regulator of abscisic acid early signaling in Arabidopsis.</title>
        <authorList>
            <person name="Osakabe Y."/>
            <person name="Maruyama K."/>
            <person name="Seki M."/>
            <person name="Satou M."/>
            <person name="Shinozaki K."/>
            <person name="Yamaguchi-Shinozaki K."/>
        </authorList>
    </citation>
    <scope>FUNCTION</scope>
    <scope>DISRUPTION PHENOTYPE</scope>
    <scope>SUBCELLULAR LOCATION</scope>
    <scope>INDUCTION BY ABSCISIC ACID</scope>
</reference>
<reference key="7">
    <citation type="journal article" date="2007" name="Dev. Cell">
        <title>RPK1 and TOAD2 are two receptor-like kinases redundantly required for arabidopsis embryonic pattern formation.</title>
        <authorList>
            <person name="Nodine M.D."/>
            <person name="Yadegari R."/>
            <person name="Tax F.E."/>
        </authorList>
    </citation>
    <scope>FUNCTION</scope>
    <scope>SUBCELLULAR LOCATION</scope>
    <scope>DEVELOPMENTAL STAGE</scope>
</reference>
<reference key="8">
    <citation type="journal article" date="2008" name="Dev. Biol.">
        <title>Two receptor-like kinases required together for the establishment of Arabidopsis cotyledon primordia.</title>
        <authorList>
            <person name="Nodine M.D."/>
            <person name="Tax F.E."/>
        </authorList>
    </citation>
    <scope>FUNCTION</scope>
    <scope>DISRUPTION PHENOTYPE</scope>
    <scope>SUBCELLULAR LOCATION</scope>
    <scope>DEVELOPMENTAL STAGE</scope>
</reference>
<keyword id="KW-0938">Abscisic acid signaling pathway</keyword>
<keyword id="KW-0067">ATP-binding</keyword>
<keyword id="KW-1003">Cell membrane</keyword>
<keyword id="KW-0217">Developmental protein</keyword>
<keyword id="KW-0418">Kinase</keyword>
<keyword id="KW-0433">Leucine-rich repeat</keyword>
<keyword id="KW-0472">Membrane</keyword>
<keyword id="KW-0547">Nucleotide-binding</keyword>
<keyword id="KW-0597">Phosphoprotein</keyword>
<keyword id="KW-0675">Receptor</keyword>
<keyword id="KW-1185">Reference proteome</keyword>
<keyword id="KW-0677">Repeat</keyword>
<keyword id="KW-0723">Serine/threonine-protein kinase</keyword>
<keyword id="KW-0732">Signal</keyword>
<keyword id="KW-0808">Transferase</keyword>
<keyword id="KW-0812">Transmembrane</keyword>
<keyword id="KW-1133">Transmembrane helix</keyword>
<gene>
    <name type="primary">RPK1</name>
    <name type="synonym">TOAD1</name>
    <name type="ordered locus">At1g69270</name>
    <name type="ORF">F23O10.15</name>
    <name type="ORF">F4N2.23</name>
</gene>
<dbReference type="EC" id="2.7.11.1"/>
<dbReference type="EMBL" id="U55875">
    <property type="protein sequence ID" value="AAD11518.1"/>
    <property type="molecule type" value="mRNA"/>
</dbReference>
<dbReference type="EMBL" id="AC008262">
    <property type="protein sequence ID" value="AAF27063.1"/>
    <property type="status" value="ALT_SEQ"/>
    <property type="molecule type" value="Genomic_DNA"/>
</dbReference>
<dbReference type="EMBL" id="AC018364">
    <property type="protein sequence ID" value="AAG52484.1"/>
    <property type="molecule type" value="Genomic_DNA"/>
</dbReference>
<dbReference type="EMBL" id="CP002684">
    <property type="protein sequence ID" value="AEE34904.1"/>
    <property type="molecule type" value="Genomic_DNA"/>
</dbReference>
<dbReference type="EMBL" id="AY099858">
    <property type="protein sequence ID" value="AAM20709.1"/>
    <property type="molecule type" value="mRNA"/>
</dbReference>
<dbReference type="EMBL" id="BT008896">
    <property type="protein sequence ID" value="AAP68335.1"/>
    <property type="molecule type" value="mRNA"/>
</dbReference>
<dbReference type="EMBL" id="FJ708674">
    <property type="protein sequence ID" value="ACN59269.1"/>
    <property type="molecule type" value="mRNA"/>
</dbReference>
<dbReference type="PIR" id="G96716">
    <property type="entry name" value="G96716"/>
</dbReference>
<dbReference type="RefSeq" id="NP_177087.1">
    <property type="nucleotide sequence ID" value="NM_105594.3"/>
</dbReference>
<dbReference type="SMR" id="Q9ZRF9"/>
<dbReference type="BioGRID" id="28479">
    <property type="interactions" value="25"/>
</dbReference>
<dbReference type="IntAct" id="Q9ZRF9">
    <property type="interactions" value="43"/>
</dbReference>
<dbReference type="STRING" id="3702.Q9ZRF9"/>
<dbReference type="PaxDb" id="3702-AT1G69270.1"/>
<dbReference type="ProteomicsDB" id="228237"/>
<dbReference type="EnsemblPlants" id="AT1G69270.1">
    <property type="protein sequence ID" value="AT1G69270.1"/>
    <property type="gene ID" value="AT1G69270"/>
</dbReference>
<dbReference type="GeneID" id="843258"/>
<dbReference type="Gramene" id="AT1G69270.1">
    <property type="protein sequence ID" value="AT1G69270.1"/>
    <property type="gene ID" value="AT1G69270"/>
</dbReference>
<dbReference type="KEGG" id="ath:AT1G69270"/>
<dbReference type="Araport" id="AT1G69270"/>
<dbReference type="TAIR" id="AT1G69270">
    <property type="gene designation" value="RPK1"/>
</dbReference>
<dbReference type="eggNOG" id="ENOG502QTCP">
    <property type="taxonomic scope" value="Eukaryota"/>
</dbReference>
<dbReference type="HOGENOM" id="CLU_000288_92_6_1"/>
<dbReference type="InParanoid" id="Q9ZRF9"/>
<dbReference type="OMA" id="KWKRNSQ"/>
<dbReference type="PhylomeDB" id="Q9ZRF9"/>
<dbReference type="PRO" id="PR:Q9ZRF9"/>
<dbReference type="Proteomes" id="UP000006548">
    <property type="component" value="Chromosome 1"/>
</dbReference>
<dbReference type="ExpressionAtlas" id="Q9ZRF9">
    <property type="expression patterns" value="baseline and differential"/>
</dbReference>
<dbReference type="GO" id="GO:0005777">
    <property type="term" value="C:peroxisome"/>
    <property type="evidence" value="ECO:0007005"/>
    <property type="project" value="TAIR"/>
</dbReference>
<dbReference type="GO" id="GO:0005886">
    <property type="term" value="C:plasma membrane"/>
    <property type="evidence" value="ECO:0000314"/>
    <property type="project" value="TAIR"/>
</dbReference>
<dbReference type="GO" id="GO:0005524">
    <property type="term" value="F:ATP binding"/>
    <property type="evidence" value="ECO:0007669"/>
    <property type="project" value="UniProtKB-KW"/>
</dbReference>
<dbReference type="GO" id="GO:0042802">
    <property type="term" value="F:identical protein binding"/>
    <property type="evidence" value="ECO:0000353"/>
    <property type="project" value="IntAct"/>
</dbReference>
<dbReference type="GO" id="GO:0004672">
    <property type="term" value="F:protein kinase activity"/>
    <property type="evidence" value="ECO:0000314"/>
    <property type="project" value="TAIR"/>
</dbReference>
<dbReference type="GO" id="GO:0106310">
    <property type="term" value="F:protein serine kinase activity"/>
    <property type="evidence" value="ECO:0007669"/>
    <property type="project" value="RHEA"/>
</dbReference>
<dbReference type="GO" id="GO:0004674">
    <property type="term" value="F:protein serine/threonine kinase activity"/>
    <property type="evidence" value="ECO:0007669"/>
    <property type="project" value="UniProtKB-KW"/>
</dbReference>
<dbReference type="GO" id="GO:0009738">
    <property type="term" value="P:abscisic acid-activated signaling pathway"/>
    <property type="evidence" value="ECO:0000315"/>
    <property type="project" value="TAIR"/>
</dbReference>
<dbReference type="GO" id="GO:0048508">
    <property type="term" value="P:embryonic meristem development"/>
    <property type="evidence" value="ECO:0000315"/>
    <property type="project" value="UniProtKB"/>
</dbReference>
<dbReference type="GO" id="GO:0009942">
    <property type="term" value="P:longitudinal axis specification"/>
    <property type="evidence" value="ECO:0000315"/>
    <property type="project" value="UniProtKB"/>
</dbReference>
<dbReference type="GO" id="GO:0009945">
    <property type="term" value="P:radial axis specification"/>
    <property type="evidence" value="ECO:0000315"/>
    <property type="project" value="UniProtKB"/>
</dbReference>
<dbReference type="GO" id="GO:0009737">
    <property type="term" value="P:response to abscisic acid"/>
    <property type="evidence" value="ECO:0000270"/>
    <property type="project" value="UniProtKB"/>
</dbReference>
<dbReference type="GO" id="GO:0009409">
    <property type="term" value="P:response to cold"/>
    <property type="evidence" value="ECO:0000270"/>
    <property type="project" value="UniProtKB"/>
</dbReference>
<dbReference type="GO" id="GO:0009651">
    <property type="term" value="P:response to salt stress"/>
    <property type="evidence" value="ECO:0000270"/>
    <property type="project" value="UniProtKB"/>
</dbReference>
<dbReference type="GO" id="GO:0009414">
    <property type="term" value="P:response to water deprivation"/>
    <property type="evidence" value="ECO:0000270"/>
    <property type="project" value="UniProtKB"/>
</dbReference>
<dbReference type="FunFam" id="1.10.510.10:FF:000192">
    <property type="entry name" value="LRR receptor-like serine/threonine-protein kinase RPK2"/>
    <property type="match status" value="1"/>
</dbReference>
<dbReference type="FunFam" id="3.30.200.20:FF:000260">
    <property type="entry name" value="LRR receptor-like serine/threonine-protein kinase RPK2"/>
    <property type="match status" value="1"/>
</dbReference>
<dbReference type="FunFam" id="3.80.10.10:FF:001652">
    <property type="entry name" value="Probable LRR receptor-like serine/threonine-protein kinase RPK1"/>
    <property type="match status" value="1"/>
</dbReference>
<dbReference type="Gene3D" id="3.30.200.20">
    <property type="entry name" value="Phosphorylase Kinase, domain 1"/>
    <property type="match status" value="1"/>
</dbReference>
<dbReference type="Gene3D" id="3.80.10.10">
    <property type="entry name" value="Ribonuclease Inhibitor"/>
    <property type="match status" value="1"/>
</dbReference>
<dbReference type="Gene3D" id="1.10.510.10">
    <property type="entry name" value="Transferase(Phosphotransferase) domain 1"/>
    <property type="match status" value="1"/>
</dbReference>
<dbReference type="InterPro" id="IPR011009">
    <property type="entry name" value="Kinase-like_dom_sf"/>
</dbReference>
<dbReference type="InterPro" id="IPR001611">
    <property type="entry name" value="Leu-rich_rpt"/>
</dbReference>
<dbReference type="InterPro" id="IPR032675">
    <property type="entry name" value="LRR_dom_sf"/>
</dbReference>
<dbReference type="InterPro" id="IPR013210">
    <property type="entry name" value="LRR_N_plant-typ"/>
</dbReference>
<dbReference type="InterPro" id="IPR051824">
    <property type="entry name" value="LRR_Rcpt-Like_S/T_Kinase"/>
</dbReference>
<dbReference type="InterPro" id="IPR000719">
    <property type="entry name" value="Prot_kinase_dom"/>
</dbReference>
<dbReference type="InterPro" id="IPR017441">
    <property type="entry name" value="Protein_kinase_ATP_BS"/>
</dbReference>
<dbReference type="InterPro" id="IPR008271">
    <property type="entry name" value="Ser/Thr_kinase_AS"/>
</dbReference>
<dbReference type="PANTHER" id="PTHR48006">
    <property type="entry name" value="LEUCINE-RICH REPEAT-CONTAINING PROTEIN DDB_G0281931-RELATED"/>
    <property type="match status" value="1"/>
</dbReference>
<dbReference type="PANTHER" id="PTHR48006:SF102">
    <property type="entry name" value="LEUCINE-RICH REPEAT-CONTAINING PROTEIN DDB_G0281931-RELATED"/>
    <property type="match status" value="1"/>
</dbReference>
<dbReference type="Pfam" id="PF00560">
    <property type="entry name" value="LRR_1"/>
    <property type="match status" value="1"/>
</dbReference>
<dbReference type="Pfam" id="PF08263">
    <property type="entry name" value="LRRNT_2"/>
    <property type="match status" value="1"/>
</dbReference>
<dbReference type="Pfam" id="PF00069">
    <property type="entry name" value="Pkinase"/>
    <property type="match status" value="1"/>
</dbReference>
<dbReference type="SMART" id="SM00220">
    <property type="entry name" value="S_TKc"/>
    <property type="match status" value="1"/>
</dbReference>
<dbReference type="SUPFAM" id="SSF52058">
    <property type="entry name" value="L domain-like"/>
    <property type="match status" value="1"/>
</dbReference>
<dbReference type="SUPFAM" id="SSF56112">
    <property type="entry name" value="Protein kinase-like (PK-like)"/>
    <property type="match status" value="1"/>
</dbReference>
<dbReference type="PROSITE" id="PS00107">
    <property type="entry name" value="PROTEIN_KINASE_ATP"/>
    <property type="match status" value="1"/>
</dbReference>
<dbReference type="PROSITE" id="PS50011">
    <property type="entry name" value="PROTEIN_KINASE_DOM"/>
    <property type="match status" value="1"/>
</dbReference>
<dbReference type="PROSITE" id="PS00108">
    <property type="entry name" value="PROTEIN_KINASE_ST"/>
    <property type="match status" value="1"/>
</dbReference>